<sequence length="361" mass="39869">MLYWLTQLLQGQYHAFRVFQYLTFRSILASLTALIVGLLCGPLMIRWLRGLQIGQMVRSDGPQTHLSKAGTPTMGGVLILLAITVSCLLWCDLRQTSLWLVLLVTLANGLVGWVDDYRKLVLKNSKGLPGRWKYFWQSVIALVAVSYLYWNASLPVHTQLTVPFFKTVTWDLGVFFPVLAYFVIVGSSNAVNLTDGLDGLAIMPIVMVAGALGVFAYASSNAVYSNYLGIPYVPNTGELTIFCSSIVGAGLGFLWYNSYPAQVFMGDVGSLALGAALGIVAIVVRQELVLLIMGGLFVIETLSVILQVGYFKYSGGKRLFRMAPLHHHFELKGWSEPKVIVRFWIITVVFVLCGLATLKLR</sequence>
<keyword id="KW-0131">Cell cycle</keyword>
<keyword id="KW-0132">Cell division</keyword>
<keyword id="KW-0997">Cell inner membrane</keyword>
<keyword id="KW-1003">Cell membrane</keyword>
<keyword id="KW-0133">Cell shape</keyword>
<keyword id="KW-0961">Cell wall biogenesis/degradation</keyword>
<keyword id="KW-0460">Magnesium</keyword>
<keyword id="KW-0472">Membrane</keyword>
<keyword id="KW-0479">Metal-binding</keyword>
<keyword id="KW-0573">Peptidoglycan synthesis</keyword>
<keyword id="KW-0808">Transferase</keyword>
<keyword id="KW-0812">Transmembrane</keyword>
<keyword id="KW-1133">Transmembrane helix</keyword>
<reference key="1">
    <citation type="journal article" date="2004" name="Nat. Genet.">
        <title>Evidence in the Legionella pneumophila genome for exploitation of host cell functions and high genome plasticity.</title>
        <authorList>
            <person name="Cazalet C."/>
            <person name="Rusniok C."/>
            <person name="Brueggemann H."/>
            <person name="Zidane N."/>
            <person name="Magnier A."/>
            <person name="Ma L."/>
            <person name="Tichit M."/>
            <person name="Jarraud S."/>
            <person name="Bouchier C."/>
            <person name="Vandenesch F."/>
            <person name="Kunst F."/>
            <person name="Etienne J."/>
            <person name="Glaser P."/>
            <person name="Buchrieser C."/>
        </authorList>
    </citation>
    <scope>NUCLEOTIDE SEQUENCE [LARGE SCALE GENOMIC DNA]</scope>
    <source>
        <strain>Paris</strain>
    </source>
</reference>
<accession>Q5X1S3</accession>
<gene>
    <name evidence="1" type="primary">mraY</name>
    <name type="ordered locus">lpp2670</name>
</gene>
<protein>
    <recommendedName>
        <fullName evidence="1">Phospho-N-acetylmuramoyl-pentapeptide-transferase</fullName>
        <ecNumber evidence="1">2.7.8.13</ecNumber>
    </recommendedName>
    <alternativeName>
        <fullName evidence="1">UDP-MurNAc-pentapeptide phosphotransferase</fullName>
    </alternativeName>
</protein>
<comment type="function">
    <text evidence="1">Catalyzes the initial step of the lipid cycle reactions in the biosynthesis of the cell wall peptidoglycan: transfers peptidoglycan precursor phospho-MurNAc-pentapeptide from UDP-MurNAc-pentapeptide onto the lipid carrier undecaprenyl phosphate, yielding undecaprenyl-pyrophosphoryl-MurNAc-pentapeptide, known as lipid I.</text>
</comment>
<comment type="catalytic activity">
    <reaction evidence="1">
        <text>UDP-N-acetyl-alpha-D-muramoyl-L-alanyl-gamma-D-glutamyl-meso-2,6-diaminopimeloyl-D-alanyl-D-alanine + di-trans,octa-cis-undecaprenyl phosphate = di-trans,octa-cis-undecaprenyl diphospho-N-acetyl-alpha-D-muramoyl-L-alanyl-D-glutamyl-meso-2,6-diaminopimeloyl-D-alanyl-D-alanine + UMP</text>
        <dbReference type="Rhea" id="RHEA:28386"/>
        <dbReference type="ChEBI" id="CHEBI:57865"/>
        <dbReference type="ChEBI" id="CHEBI:60392"/>
        <dbReference type="ChEBI" id="CHEBI:61386"/>
        <dbReference type="ChEBI" id="CHEBI:61387"/>
        <dbReference type="EC" id="2.7.8.13"/>
    </reaction>
</comment>
<comment type="cofactor">
    <cofactor evidence="1">
        <name>Mg(2+)</name>
        <dbReference type="ChEBI" id="CHEBI:18420"/>
    </cofactor>
</comment>
<comment type="pathway">
    <text evidence="1">Cell wall biogenesis; peptidoglycan biosynthesis.</text>
</comment>
<comment type="subcellular location">
    <subcellularLocation>
        <location evidence="1">Cell inner membrane</location>
        <topology evidence="1">Multi-pass membrane protein</topology>
    </subcellularLocation>
</comment>
<comment type="similarity">
    <text evidence="1">Belongs to the glycosyltransferase 4 family. MraY subfamily.</text>
</comment>
<evidence type="ECO:0000255" key="1">
    <source>
        <dbReference type="HAMAP-Rule" id="MF_00038"/>
    </source>
</evidence>
<proteinExistence type="inferred from homology"/>
<organism>
    <name type="scientific">Legionella pneumophila (strain Paris)</name>
    <dbReference type="NCBI Taxonomy" id="297246"/>
    <lineage>
        <taxon>Bacteria</taxon>
        <taxon>Pseudomonadati</taxon>
        <taxon>Pseudomonadota</taxon>
        <taxon>Gammaproteobacteria</taxon>
        <taxon>Legionellales</taxon>
        <taxon>Legionellaceae</taxon>
        <taxon>Legionella</taxon>
    </lineage>
</organism>
<dbReference type="EC" id="2.7.8.13" evidence="1"/>
<dbReference type="EMBL" id="CR628336">
    <property type="protein sequence ID" value="CAH13823.1"/>
    <property type="molecule type" value="Genomic_DNA"/>
</dbReference>
<dbReference type="RefSeq" id="WP_011947536.1">
    <property type="nucleotide sequence ID" value="NC_006368.1"/>
</dbReference>
<dbReference type="SMR" id="Q5X1S3"/>
<dbReference type="KEGG" id="lpp:lpp2670"/>
<dbReference type="LegioList" id="lpp2670"/>
<dbReference type="HOGENOM" id="CLU_023982_0_0_6"/>
<dbReference type="UniPathway" id="UPA00219"/>
<dbReference type="GO" id="GO:0005886">
    <property type="term" value="C:plasma membrane"/>
    <property type="evidence" value="ECO:0007669"/>
    <property type="project" value="UniProtKB-SubCell"/>
</dbReference>
<dbReference type="GO" id="GO:0046872">
    <property type="term" value="F:metal ion binding"/>
    <property type="evidence" value="ECO:0007669"/>
    <property type="project" value="UniProtKB-KW"/>
</dbReference>
<dbReference type="GO" id="GO:0008963">
    <property type="term" value="F:phospho-N-acetylmuramoyl-pentapeptide-transferase activity"/>
    <property type="evidence" value="ECO:0007669"/>
    <property type="project" value="UniProtKB-UniRule"/>
</dbReference>
<dbReference type="GO" id="GO:0051992">
    <property type="term" value="F:UDP-N-acetylmuramoyl-L-alanyl-D-glutamyl-meso-2,6-diaminopimelyl-D-alanyl-D-alanine:undecaprenyl-phosphate transferase activity"/>
    <property type="evidence" value="ECO:0007669"/>
    <property type="project" value="RHEA"/>
</dbReference>
<dbReference type="GO" id="GO:0051301">
    <property type="term" value="P:cell division"/>
    <property type="evidence" value="ECO:0007669"/>
    <property type="project" value="UniProtKB-KW"/>
</dbReference>
<dbReference type="GO" id="GO:0071555">
    <property type="term" value="P:cell wall organization"/>
    <property type="evidence" value="ECO:0007669"/>
    <property type="project" value="UniProtKB-KW"/>
</dbReference>
<dbReference type="GO" id="GO:0009252">
    <property type="term" value="P:peptidoglycan biosynthetic process"/>
    <property type="evidence" value="ECO:0007669"/>
    <property type="project" value="UniProtKB-UniRule"/>
</dbReference>
<dbReference type="GO" id="GO:0008360">
    <property type="term" value="P:regulation of cell shape"/>
    <property type="evidence" value="ECO:0007669"/>
    <property type="project" value="UniProtKB-KW"/>
</dbReference>
<dbReference type="CDD" id="cd06852">
    <property type="entry name" value="GT_MraY"/>
    <property type="match status" value="1"/>
</dbReference>
<dbReference type="HAMAP" id="MF_00038">
    <property type="entry name" value="MraY"/>
    <property type="match status" value="1"/>
</dbReference>
<dbReference type="InterPro" id="IPR000715">
    <property type="entry name" value="Glycosyl_transferase_4"/>
</dbReference>
<dbReference type="InterPro" id="IPR003524">
    <property type="entry name" value="PNAcMuramoyl-5peptid_Trfase"/>
</dbReference>
<dbReference type="InterPro" id="IPR018480">
    <property type="entry name" value="PNAcMuramoyl-5peptid_Trfase_CS"/>
</dbReference>
<dbReference type="NCBIfam" id="TIGR00445">
    <property type="entry name" value="mraY"/>
    <property type="match status" value="1"/>
</dbReference>
<dbReference type="PANTHER" id="PTHR22926">
    <property type="entry name" value="PHOSPHO-N-ACETYLMURAMOYL-PENTAPEPTIDE-TRANSFERASE"/>
    <property type="match status" value="1"/>
</dbReference>
<dbReference type="PANTHER" id="PTHR22926:SF5">
    <property type="entry name" value="PHOSPHO-N-ACETYLMURAMOYL-PENTAPEPTIDE-TRANSFERASE HOMOLOG"/>
    <property type="match status" value="1"/>
</dbReference>
<dbReference type="Pfam" id="PF00953">
    <property type="entry name" value="Glycos_transf_4"/>
    <property type="match status" value="1"/>
</dbReference>
<dbReference type="Pfam" id="PF10555">
    <property type="entry name" value="MraY_sig1"/>
    <property type="match status" value="1"/>
</dbReference>
<dbReference type="PROSITE" id="PS01347">
    <property type="entry name" value="MRAY_1"/>
    <property type="match status" value="1"/>
</dbReference>
<dbReference type="PROSITE" id="PS01348">
    <property type="entry name" value="MRAY_2"/>
    <property type="match status" value="1"/>
</dbReference>
<name>MRAY_LEGPA</name>
<feature type="chain" id="PRO_0000108842" description="Phospho-N-acetylmuramoyl-pentapeptide-transferase">
    <location>
        <begin position="1"/>
        <end position="361"/>
    </location>
</feature>
<feature type="transmembrane region" description="Helical" evidence="1">
    <location>
        <begin position="27"/>
        <end position="47"/>
    </location>
</feature>
<feature type="transmembrane region" description="Helical" evidence="1">
    <location>
        <begin position="70"/>
        <end position="90"/>
    </location>
</feature>
<feature type="transmembrane region" description="Helical" evidence="1">
    <location>
        <begin position="97"/>
        <end position="117"/>
    </location>
</feature>
<feature type="transmembrane region" description="Helical" evidence="1">
    <location>
        <begin position="134"/>
        <end position="154"/>
    </location>
</feature>
<feature type="transmembrane region" description="Helical" evidence="1">
    <location>
        <begin position="167"/>
        <end position="187"/>
    </location>
</feature>
<feature type="transmembrane region" description="Helical" evidence="1">
    <location>
        <begin position="199"/>
        <end position="219"/>
    </location>
</feature>
<feature type="transmembrane region" description="Helical" evidence="1">
    <location>
        <begin position="236"/>
        <end position="256"/>
    </location>
</feature>
<feature type="transmembrane region" description="Helical" evidence="1">
    <location>
        <begin position="263"/>
        <end position="283"/>
    </location>
</feature>
<feature type="transmembrane region" description="Helical" evidence="1">
    <location>
        <begin position="288"/>
        <end position="308"/>
    </location>
</feature>
<feature type="transmembrane region" description="Helical" evidence="1">
    <location>
        <begin position="338"/>
        <end position="358"/>
    </location>
</feature>